<name>PH4H_CHLRE</name>
<keyword id="KW-0021">Allosteric enzyme</keyword>
<keyword id="KW-0150">Chloroplast</keyword>
<keyword id="KW-0408">Iron</keyword>
<keyword id="KW-0479">Metal-binding</keyword>
<keyword id="KW-0503">Monooxygenase</keyword>
<keyword id="KW-0560">Oxidoreductase</keyword>
<keyword id="KW-0585">Phenylalanine catabolism</keyword>
<keyword id="KW-0934">Plastid</keyword>
<keyword id="KW-1185">Reference proteome</keyword>
<keyword id="KW-0809">Transit peptide</keyword>
<reference key="1">
    <citation type="journal article" date="2010" name="Plant Cell">
        <title>Nonflowering plants possess a unique folate-dependent phenylalanine hydroxylase that is localized in chloroplasts.</title>
        <authorList>
            <person name="Pribat A."/>
            <person name="Noiriel A."/>
            <person name="Morse A.M."/>
            <person name="Davis J.M."/>
            <person name="Fouquet R."/>
            <person name="Loizeau K."/>
            <person name="Ravanel S."/>
            <person name="Frank W."/>
            <person name="Haas R."/>
            <person name="Reski R."/>
            <person name="Bedair M."/>
            <person name="Sumner L.W."/>
            <person name="Hanson A.D."/>
        </authorList>
    </citation>
    <scope>NUCLEOTIDE SEQUENCE [MRNA]</scope>
    <scope>FUNCTION</scope>
</reference>
<reference key="2">
    <citation type="journal article" date="2007" name="Science">
        <title>The Chlamydomonas genome reveals the evolution of key animal and plant functions.</title>
        <authorList>
            <person name="Merchant S.S."/>
            <person name="Prochnik S.E."/>
            <person name="Vallon O."/>
            <person name="Harris E.H."/>
            <person name="Karpowicz S.J."/>
            <person name="Witman G.B."/>
            <person name="Terry A."/>
            <person name="Salamov A."/>
            <person name="Fritz-Laylin L.K."/>
            <person name="Marechal-Drouard L."/>
            <person name="Marshall W.F."/>
            <person name="Qu L.H."/>
            <person name="Nelson D.R."/>
            <person name="Sanderfoot A.A."/>
            <person name="Spalding M.H."/>
            <person name="Kapitonov V.V."/>
            <person name="Ren Q."/>
            <person name="Ferris P."/>
            <person name="Lindquist E."/>
            <person name="Shapiro H."/>
            <person name="Lucas S.M."/>
            <person name="Grimwood J."/>
            <person name="Schmutz J."/>
            <person name="Cardol P."/>
            <person name="Cerutti H."/>
            <person name="Chanfreau G."/>
            <person name="Chen C.L."/>
            <person name="Cognat V."/>
            <person name="Croft M.T."/>
            <person name="Dent R."/>
            <person name="Dutcher S."/>
            <person name="Fernandez E."/>
            <person name="Fukuzawa H."/>
            <person name="Gonzalez-Ballester D."/>
            <person name="Gonzalez-Halphen D."/>
            <person name="Hallmann A."/>
            <person name="Hanikenne M."/>
            <person name="Hippler M."/>
            <person name="Inwood W."/>
            <person name="Jabbari K."/>
            <person name="Kalanon M."/>
            <person name="Kuras R."/>
            <person name="Lefebvre P.A."/>
            <person name="Lemaire S.D."/>
            <person name="Lobanov A.V."/>
            <person name="Lohr M."/>
            <person name="Manuell A."/>
            <person name="Meier I."/>
            <person name="Mets L."/>
            <person name="Mittag M."/>
            <person name="Mittelmeier T."/>
            <person name="Moroney J.V."/>
            <person name="Moseley J."/>
            <person name="Napoli C."/>
            <person name="Nedelcu A.M."/>
            <person name="Niyogi K."/>
            <person name="Novoselov S.V."/>
            <person name="Paulsen I.T."/>
            <person name="Pazour G.J."/>
            <person name="Purton S."/>
            <person name="Ral J.P."/>
            <person name="Riano-Pachon D.M."/>
            <person name="Riekhof W."/>
            <person name="Rymarquis L."/>
            <person name="Schroda M."/>
            <person name="Stern D."/>
            <person name="Umen J."/>
            <person name="Willows R."/>
            <person name="Wilson N."/>
            <person name="Zimmer S.L."/>
            <person name="Allmer J."/>
            <person name="Balk J."/>
            <person name="Bisova K."/>
            <person name="Chen C.J."/>
            <person name="Elias M."/>
            <person name="Gendler K."/>
            <person name="Hauser C."/>
            <person name="Lamb M.R."/>
            <person name="Ledford H."/>
            <person name="Long J.C."/>
            <person name="Minagawa J."/>
            <person name="Page M.D."/>
            <person name="Pan J."/>
            <person name="Pootakham W."/>
            <person name="Roje S."/>
            <person name="Rose A."/>
            <person name="Stahlberg E."/>
            <person name="Terauchi A.M."/>
            <person name="Yang P."/>
            <person name="Ball S."/>
            <person name="Bowler C."/>
            <person name="Dieckmann C.L."/>
            <person name="Gladyshev V.N."/>
            <person name="Green P."/>
            <person name="Jorgensen R."/>
            <person name="Mayfield S."/>
            <person name="Mueller-Roeber B."/>
            <person name="Rajamani S."/>
            <person name="Sayre R.T."/>
            <person name="Brokstein P."/>
            <person name="Dubchak I."/>
            <person name="Goodstein D."/>
            <person name="Hornick L."/>
            <person name="Huang Y.W."/>
            <person name="Jhaveri J."/>
            <person name="Luo Y."/>
            <person name="Martinez D."/>
            <person name="Ngau W.C."/>
            <person name="Otillar B."/>
            <person name="Poliakov A."/>
            <person name="Porter A."/>
            <person name="Szajkowski L."/>
            <person name="Werner G."/>
            <person name="Zhou K."/>
            <person name="Grigoriev I.V."/>
            <person name="Rokhsar D.S."/>
            <person name="Grossman A.R."/>
        </authorList>
    </citation>
    <scope>NUCLEOTIDE SEQUENCE [LARGE SCALE GENOMIC DNA]</scope>
    <source>
        <strain>CC-503</strain>
    </source>
</reference>
<comment type="function">
    <text evidence="5 8">Catalyzes the hydroxylation of L-phenylalanine to L-tyrosine (Probable). Can functionally complement an Escherichia coli tyrosine auxotroph (PubMed:20959559).</text>
</comment>
<comment type="catalytic activity">
    <reaction evidence="1">
        <text>(6R)-L-erythro-5,6,7,8-tetrahydrobiopterin + L-phenylalanine + O2 = (4aS,6R)-4a-hydroxy-L-erythro-5,6,7,8-tetrahydrobiopterin + L-tyrosine</text>
        <dbReference type="Rhea" id="RHEA:20273"/>
        <dbReference type="ChEBI" id="CHEBI:15379"/>
        <dbReference type="ChEBI" id="CHEBI:15642"/>
        <dbReference type="ChEBI" id="CHEBI:58095"/>
        <dbReference type="ChEBI" id="CHEBI:58315"/>
        <dbReference type="ChEBI" id="CHEBI:59560"/>
        <dbReference type="EC" id="1.14.16.1"/>
    </reaction>
    <physiologicalReaction direction="left-to-right" evidence="1">
        <dbReference type="Rhea" id="RHEA:20274"/>
    </physiologicalReaction>
</comment>
<comment type="cofactor">
    <cofactor evidence="1">
        <name>Fe(2+)</name>
        <dbReference type="ChEBI" id="CHEBI:29033"/>
    </cofactor>
</comment>
<comment type="subcellular location">
    <subcellularLocation>
        <location evidence="3">Plastid</location>
        <location evidence="3">Chloroplast</location>
    </subcellularLocation>
</comment>
<comment type="similarity">
    <text evidence="7">Belongs to the biopterin-dependent aromatic amino acid hydroxylase family.</text>
</comment>
<accession>A8HQD7</accession>
<organism>
    <name type="scientific">Chlamydomonas reinhardtii</name>
    <name type="common">Chlamydomonas smithii</name>
    <dbReference type="NCBI Taxonomy" id="3055"/>
    <lineage>
        <taxon>Eukaryota</taxon>
        <taxon>Viridiplantae</taxon>
        <taxon>Chlorophyta</taxon>
        <taxon>core chlorophytes</taxon>
        <taxon>Chlorophyceae</taxon>
        <taxon>CS clade</taxon>
        <taxon>Chlamydomonadales</taxon>
        <taxon>Chlamydomonadaceae</taxon>
        <taxon>Chlamydomonas</taxon>
    </lineage>
</organism>
<evidence type="ECO:0000250" key="1">
    <source>
        <dbReference type="UniProtKB" id="E5KBU3"/>
    </source>
</evidence>
<evidence type="ECO:0000250" key="2">
    <source>
        <dbReference type="UniProtKB" id="P04176"/>
    </source>
</evidence>
<evidence type="ECO:0000255" key="3"/>
<evidence type="ECO:0000256" key="4">
    <source>
        <dbReference type="SAM" id="MobiDB-lite"/>
    </source>
</evidence>
<evidence type="ECO:0000269" key="5">
    <source>
    </source>
</evidence>
<evidence type="ECO:0000303" key="6">
    <source>
    </source>
</evidence>
<evidence type="ECO:0000305" key="7"/>
<evidence type="ECO:0000305" key="8">
    <source>
    </source>
</evidence>
<evidence type="ECO:0000312" key="9">
    <source>
        <dbReference type="EMBL" id="PNW88432.1"/>
    </source>
</evidence>
<sequence length="361" mass="39944">MLALRQGALLLSARGGQTTHDNLQLCAGPSRRPRARWISSAPRPSTLVERHIRPQASTASDATTSTSQRILSIHDVDNGQILGFGADLAEDHPGFHDPAYKQRRAWLAEMAKTHRIGTPIPDVEYSPAEVATWDAVLEELSGLLPQHACREYLRCLTLFDFRKGRVPQLEEMNTVLRSTTGWTVRPVAGLMHPRHFLAGLAFKHFHSTQYMRHPSKPSYTPEPDVVHELIGHVPLLADPAYARLIQTIGLASLAADDKQIWHLTKVYWHTVEFGVVREGDQVKAFGAGILSSYGELAHMASGAAALERLDPFRPQPRMAYKDGFQKRYFVLDSFAEGSELLSSYAASLGLPESLRGDASVA</sequence>
<feature type="transit peptide" description="Chloroplast" evidence="3">
    <location>
        <begin position="1"/>
        <end position="55"/>
    </location>
</feature>
<feature type="chain" id="PRO_0000457288" description="Phenylalanine 4-monooxygenase, chloroplastic">
    <location>
        <begin position="56"/>
        <end position="361"/>
    </location>
</feature>
<feature type="region of interest" description="Disordered" evidence="4">
    <location>
        <begin position="47"/>
        <end position="67"/>
    </location>
</feature>
<feature type="compositionally biased region" description="Low complexity" evidence="4">
    <location>
        <begin position="56"/>
        <end position="67"/>
    </location>
</feature>
<feature type="binding site" evidence="2">
    <location>
        <position position="227"/>
    </location>
    <ligand>
        <name>Fe cation</name>
        <dbReference type="ChEBI" id="CHEBI:24875"/>
    </ligand>
</feature>
<feature type="binding site" evidence="2">
    <location>
        <position position="232"/>
    </location>
    <ligand>
        <name>Fe cation</name>
        <dbReference type="ChEBI" id="CHEBI:24875"/>
    </ligand>
</feature>
<feature type="binding site" evidence="2">
    <location>
        <position position="272"/>
    </location>
    <ligand>
        <name>Fe cation</name>
        <dbReference type="ChEBI" id="CHEBI:24875"/>
    </ligand>
</feature>
<proteinExistence type="evidence at transcript level"/>
<gene>
    <name evidence="9" type="ORF">CHLRE_01g029250v5</name>
</gene>
<dbReference type="EC" id="1.14.16.1" evidence="1"/>
<dbReference type="EMBL" id="HQ003816">
    <property type="protein sequence ID" value="ADR30401.1"/>
    <property type="molecule type" value="mRNA"/>
</dbReference>
<dbReference type="EMBL" id="CM008962">
    <property type="protein sequence ID" value="PNW88432.1"/>
    <property type="molecule type" value="Genomic_DNA"/>
</dbReference>
<dbReference type="RefSeq" id="XP_001690034.1">
    <property type="nucleotide sequence ID" value="XM_001689982.2"/>
</dbReference>
<dbReference type="SMR" id="A8HQD7"/>
<dbReference type="STRING" id="3055.A8HQD7"/>
<dbReference type="PaxDb" id="3055-EDP09772"/>
<dbReference type="EnsemblPlants" id="PNW88432">
    <property type="protein sequence ID" value="PNW88432"/>
    <property type="gene ID" value="CHLRE_01g029250v5"/>
</dbReference>
<dbReference type="GeneID" id="5715342"/>
<dbReference type="Gramene" id="PNW88432">
    <property type="protein sequence ID" value="PNW88432"/>
    <property type="gene ID" value="CHLRE_01g029250v5"/>
</dbReference>
<dbReference type="KEGG" id="cre:CHLRE_01g029250v5"/>
<dbReference type="eggNOG" id="KOG3820">
    <property type="taxonomic scope" value="Eukaryota"/>
</dbReference>
<dbReference type="HOGENOM" id="CLU_023198_2_0_1"/>
<dbReference type="InParanoid" id="A8HQD7"/>
<dbReference type="OMA" id="FHDEVYR"/>
<dbReference type="OrthoDB" id="983542at2759"/>
<dbReference type="BioCyc" id="CHLAMY:MONOMER-17816"/>
<dbReference type="BioCyc" id="MetaCyc:MONOMER-17816"/>
<dbReference type="Proteomes" id="UP000006906">
    <property type="component" value="Chromosome 1"/>
</dbReference>
<dbReference type="GO" id="GO:0009507">
    <property type="term" value="C:chloroplast"/>
    <property type="evidence" value="ECO:0007669"/>
    <property type="project" value="UniProtKB-SubCell"/>
</dbReference>
<dbReference type="GO" id="GO:0005506">
    <property type="term" value="F:iron ion binding"/>
    <property type="evidence" value="ECO:0007669"/>
    <property type="project" value="InterPro"/>
</dbReference>
<dbReference type="GO" id="GO:0004505">
    <property type="term" value="F:phenylalanine 4-monooxygenase activity"/>
    <property type="evidence" value="ECO:0007669"/>
    <property type="project" value="UniProtKB-EC"/>
</dbReference>
<dbReference type="GO" id="GO:0006559">
    <property type="term" value="P:L-phenylalanine catabolic process"/>
    <property type="evidence" value="ECO:0007669"/>
    <property type="project" value="UniProtKB-KW"/>
</dbReference>
<dbReference type="Gene3D" id="1.10.800.10">
    <property type="entry name" value="Aromatic amino acid hydroxylase"/>
    <property type="match status" value="1"/>
</dbReference>
<dbReference type="InterPro" id="IPR001273">
    <property type="entry name" value="ArAA_hydroxylase"/>
</dbReference>
<dbReference type="InterPro" id="IPR018301">
    <property type="entry name" value="ArAA_hydroxylase_Fe/CU_BS"/>
</dbReference>
<dbReference type="InterPro" id="IPR036951">
    <property type="entry name" value="ArAA_hydroxylase_sf"/>
</dbReference>
<dbReference type="InterPro" id="IPR036329">
    <property type="entry name" value="Aro-AA_hydroxylase_C_sf"/>
</dbReference>
<dbReference type="InterPro" id="IPR019774">
    <property type="entry name" value="Aromatic-AA_hydroxylase_C"/>
</dbReference>
<dbReference type="PANTHER" id="PTHR11473">
    <property type="entry name" value="AROMATIC AMINO ACID HYDROXYLASE"/>
    <property type="match status" value="1"/>
</dbReference>
<dbReference type="PANTHER" id="PTHR11473:SF24">
    <property type="entry name" value="PHENYLALANINE-4-HYDROXYLASE"/>
    <property type="match status" value="1"/>
</dbReference>
<dbReference type="Pfam" id="PF00351">
    <property type="entry name" value="Biopterin_H"/>
    <property type="match status" value="1"/>
</dbReference>
<dbReference type="PRINTS" id="PR00372">
    <property type="entry name" value="FYWHYDRXLASE"/>
</dbReference>
<dbReference type="SUPFAM" id="SSF56534">
    <property type="entry name" value="Aromatic aminoacid monoxygenases, catalytic and oligomerization domains"/>
    <property type="match status" value="1"/>
</dbReference>
<dbReference type="PROSITE" id="PS00367">
    <property type="entry name" value="BH4_AAA_HYDROXYL_1"/>
    <property type="match status" value="1"/>
</dbReference>
<dbReference type="PROSITE" id="PS51410">
    <property type="entry name" value="BH4_AAA_HYDROXYL_2"/>
    <property type="match status" value="1"/>
</dbReference>
<protein>
    <recommendedName>
        <fullName evidence="7">Phenylalanine 4-monooxygenase, chloroplastic</fullName>
        <ecNumber evidence="1">1.14.16.1</ecNumber>
    </recommendedName>
    <alternativeName>
        <fullName evidence="6">Aromatic amino acid hydroxylase</fullName>
    </alternativeName>
    <alternativeName>
        <fullName evidence="6">Phenylalanine 4-hydroxylase</fullName>
    </alternativeName>
</protein>